<reference key="1">
    <citation type="journal article" date="2011" name="J. Bacteriol.">
        <title>Genome of Ochrobactrum anthropi ATCC 49188 T, a versatile opportunistic pathogen and symbiont of several eukaryotic hosts.</title>
        <authorList>
            <person name="Chain P.S."/>
            <person name="Lang D.M."/>
            <person name="Comerci D.J."/>
            <person name="Malfatti S.A."/>
            <person name="Vergez L.M."/>
            <person name="Shin M."/>
            <person name="Ugalde R.A."/>
            <person name="Garcia E."/>
            <person name="Tolmasky M.E."/>
        </authorList>
    </citation>
    <scope>NUCLEOTIDE SEQUENCE [LARGE SCALE GENOMIC DNA]</scope>
    <source>
        <strain>ATCC 49188 / DSM 6882 / CCUG 24695 / JCM 21032 / LMG 3331 / NBRC 15819 / NCTC 12168 / Alc 37</strain>
    </source>
</reference>
<keyword id="KW-1185">Reference proteome</keyword>
<keyword id="KW-0687">Ribonucleoprotein</keyword>
<keyword id="KW-0689">Ribosomal protein</keyword>
<keyword id="KW-0694">RNA-binding</keyword>
<keyword id="KW-0699">rRNA-binding</keyword>
<proteinExistence type="inferred from homology"/>
<accession>A6X0B9</accession>
<protein>
    <recommendedName>
        <fullName evidence="1">Large ribosomal subunit protein uL4</fullName>
    </recommendedName>
    <alternativeName>
        <fullName evidence="3">50S ribosomal protein L4</fullName>
    </alternativeName>
</protein>
<name>RL4_BRUA4</name>
<gene>
    <name evidence="1" type="primary">rplD</name>
    <name type="ordered locus">Oant_1957</name>
</gene>
<feature type="chain" id="PRO_1000052455" description="Large ribosomal subunit protein uL4">
    <location>
        <begin position="1"/>
        <end position="206"/>
    </location>
</feature>
<feature type="region of interest" description="Disordered" evidence="2">
    <location>
        <begin position="66"/>
        <end position="96"/>
    </location>
</feature>
<feature type="compositionally biased region" description="Basic residues" evidence="2">
    <location>
        <begin position="66"/>
        <end position="77"/>
    </location>
</feature>
<dbReference type="EMBL" id="CP000758">
    <property type="protein sequence ID" value="ABS14673.1"/>
    <property type="molecule type" value="Genomic_DNA"/>
</dbReference>
<dbReference type="RefSeq" id="WP_010659915.1">
    <property type="nucleotide sequence ID" value="NC_009667.1"/>
</dbReference>
<dbReference type="SMR" id="A6X0B9"/>
<dbReference type="STRING" id="439375.Oant_1957"/>
<dbReference type="GeneID" id="61317585"/>
<dbReference type="KEGG" id="oan:Oant_1957"/>
<dbReference type="eggNOG" id="COG0088">
    <property type="taxonomic scope" value="Bacteria"/>
</dbReference>
<dbReference type="HOGENOM" id="CLU_041575_5_1_5"/>
<dbReference type="PhylomeDB" id="A6X0B9"/>
<dbReference type="Proteomes" id="UP000002301">
    <property type="component" value="Chromosome 1"/>
</dbReference>
<dbReference type="GO" id="GO:1990904">
    <property type="term" value="C:ribonucleoprotein complex"/>
    <property type="evidence" value="ECO:0007669"/>
    <property type="project" value="UniProtKB-KW"/>
</dbReference>
<dbReference type="GO" id="GO:0005840">
    <property type="term" value="C:ribosome"/>
    <property type="evidence" value="ECO:0007669"/>
    <property type="project" value="UniProtKB-KW"/>
</dbReference>
<dbReference type="GO" id="GO:0019843">
    <property type="term" value="F:rRNA binding"/>
    <property type="evidence" value="ECO:0007669"/>
    <property type="project" value="UniProtKB-UniRule"/>
</dbReference>
<dbReference type="GO" id="GO:0003735">
    <property type="term" value="F:structural constituent of ribosome"/>
    <property type="evidence" value="ECO:0007669"/>
    <property type="project" value="InterPro"/>
</dbReference>
<dbReference type="GO" id="GO:0006412">
    <property type="term" value="P:translation"/>
    <property type="evidence" value="ECO:0007669"/>
    <property type="project" value="UniProtKB-UniRule"/>
</dbReference>
<dbReference type="Gene3D" id="3.40.1370.10">
    <property type="match status" value="1"/>
</dbReference>
<dbReference type="HAMAP" id="MF_01328_B">
    <property type="entry name" value="Ribosomal_uL4_B"/>
    <property type="match status" value="1"/>
</dbReference>
<dbReference type="InterPro" id="IPR002136">
    <property type="entry name" value="Ribosomal_uL4"/>
</dbReference>
<dbReference type="InterPro" id="IPR013005">
    <property type="entry name" value="Ribosomal_uL4-like"/>
</dbReference>
<dbReference type="InterPro" id="IPR023574">
    <property type="entry name" value="Ribosomal_uL4_dom_sf"/>
</dbReference>
<dbReference type="NCBIfam" id="TIGR03953">
    <property type="entry name" value="rplD_bact"/>
    <property type="match status" value="1"/>
</dbReference>
<dbReference type="PANTHER" id="PTHR10746">
    <property type="entry name" value="50S RIBOSOMAL PROTEIN L4"/>
    <property type="match status" value="1"/>
</dbReference>
<dbReference type="PANTHER" id="PTHR10746:SF6">
    <property type="entry name" value="LARGE RIBOSOMAL SUBUNIT PROTEIN UL4M"/>
    <property type="match status" value="1"/>
</dbReference>
<dbReference type="Pfam" id="PF00573">
    <property type="entry name" value="Ribosomal_L4"/>
    <property type="match status" value="1"/>
</dbReference>
<dbReference type="SUPFAM" id="SSF52166">
    <property type="entry name" value="Ribosomal protein L4"/>
    <property type="match status" value="1"/>
</dbReference>
<sequence>MDLTITTLEGKDAGKVKLNEEIFGLDPRDDILQRVVRWQLARRQQGSHKAQGRGDVSRTGAKMYKQKGTGRARHHSARAPQFRGGGQAHGPVVRSHDHDLPKKVRALGLRHALSAKAKASDLIIIDDLAATEAKTKQLVSQFAKLGLENALVIGGAEIDVNFQRAASNIPNIDVLPVQGINVYDILRRGKLVLSKAAVEALEERFK</sequence>
<organism>
    <name type="scientific">Brucella anthropi (strain ATCC 49188 / DSM 6882 / CCUG 24695 / JCM 21032 / LMG 3331 / NBRC 15819 / NCTC 12168 / Alc 37)</name>
    <name type="common">Ochrobactrum anthropi</name>
    <dbReference type="NCBI Taxonomy" id="439375"/>
    <lineage>
        <taxon>Bacteria</taxon>
        <taxon>Pseudomonadati</taxon>
        <taxon>Pseudomonadota</taxon>
        <taxon>Alphaproteobacteria</taxon>
        <taxon>Hyphomicrobiales</taxon>
        <taxon>Brucellaceae</taxon>
        <taxon>Brucella/Ochrobactrum group</taxon>
        <taxon>Brucella</taxon>
    </lineage>
</organism>
<evidence type="ECO:0000255" key="1">
    <source>
        <dbReference type="HAMAP-Rule" id="MF_01328"/>
    </source>
</evidence>
<evidence type="ECO:0000256" key="2">
    <source>
        <dbReference type="SAM" id="MobiDB-lite"/>
    </source>
</evidence>
<evidence type="ECO:0000305" key="3"/>
<comment type="function">
    <text evidence="1">One of the primary rRNA binding proteins, this protein initially binds near the 5'-end of the 23S rRNA. It is important during the early stages of 50S assembly. It makes multiple contacts with different domains of the 23S rRNA in the assembled 50S subunit and ribosome.</text>
</comment>
<comment type="function">
    <text evidence="1">Forms part of the polypeptide exit tunnel.</text>
</comment>
<comment type="subunit">
    <text evidence="1">Part of the 50S ribosomal subunit.</text>
</comment>
<comment type="similarity">
    <text evidence="1">Belongs to the universal ribosomal protein uL4 family.</text>
</comment>